<organism>
    <name type="scientific">Ectopseudomonas mendocina (strain ymp)</name>
    <name type="common">Pseudomonas mendocina</name>
    <dbReference type="NCBI Taxonomy" id="399739"/>
    <lineage>
        <taxon>Bacteria</taxon>
        <taxon>Pseudomonadati</taxon>
        <taxon>Pseudomonadota</taxon>
        <taxon>Gammaproteobacteria</taxon>
        <taxon>Pseudomonadales</taxon>
        <taxon>Pseudomonadaceae</taxon>
        <taxon>Ectopseudomonas</taxon>
    </lineage>
</organism>
<keyword id="KW-0028">Amino-acid biosynthesis</keyword>
<keyword id="KW-0963">Cytoplasm</keyword>
<keyword id="KW-0368">Histidine biosynthesis</keyword>
<keyword id="KW-0413">Isomerase</keyword>
<evidence type="ECO:0000255" key="1">
    <source>
        <dbReference type="HAMAP-Rule" id="MF_01014"/>
    </source>
</evidence>
<accession>A4Y084</accession>
<gene>
    <name evidence="1" type="primary">hisA</name>
    <name type="ordered locus">Pmen_4253</name>
</gene>
<comment type="catalytic activity">
    <reaction evidence="1">
        <text>1-(5-phospho-beta-D-ribosyl)-5-[(5-phospho-beta-D-ribosylamino)methylideneamino]imidazole-4-carboxamide = 5-[(5-phospho-1-deoxy-D-ribulos-1-ylimino)methylamino]-1-(5-phospho-beta-D-ribosyl)imidazole-4-carboxamide</text>
        <dbReference type="Rhea" id="RHEA:15469"/>
        <dbReference type="ChEBI" id="CHEBI:58435"/>
        <dbReference type="ChEBI" id="CHEBI:58525"/>
        <dbReference type="EC" id="5.3.1.16"/>
    </reaction>
</comment>
<comment type="pathway">
    <text evidence="1">Amino-acid biosynthesis; L-histidine biosynthesis; L-histidine from 5-phospho-alpha-D-ribose 1-diphosphate: step 4/9.</text>
</comment>
<comment type="subcellular location">
    <subcellularLocation>
        <location evidence="1">Cytoplasm</location>
    </subcellularLocation>
</comment>
<comment type="similarity">
    <text evidence="1">Belongs to the HisA/HisF family.</text>
</comment>
<feature type="chain" id="PRO_1000063226" description="1-(5-phosphoribosyl)-5-[(5-phosphoribosylamino)methylideneamino] imidazole-4-carboxamide isomerase">
    <location>
        <begin position="1"/>
        <end position="245"/>
    </location>
</feature>
<feature type="active site" description="Proton acceptor" evidence="1">
    <location>
        <position position="8"/>
    </location>
</feature>
<feature type="active site" description="Proton donor" evidence="1">
    <location>
        <position position="130"/>
    </location>
</feature>
<dbReference type="EC" id="5.3.1.16" evidence="1"/>
<dbReference type="EMBL" id="CP000680">
    <property type="protein sequence ID" value="ABP87000.1"/>
    <property type="molecule type" value="Genomic_DNA"/>
</dbReference>
<dbReference type="SMR" id="A4Y084"/>
<dbReference type="STRING" id="399739.Pmen_4253"/>
<dbReference type="KEGG" id="pmy:Pmen_4253"/>
<dbReference type="PATRIC" id="fig|399739.8.peg.4307"/>
<dbReference type="eggNOG" id="COG0106">
    <property type="taxonomic scope" value="Bacteria"/>
</dbReference>
<dbReference type="HOGENOM" id="CLU_048577_1_1_6"/>
<dbReference type="OrthoDB" id="9807749at2"/>
<dbReference type="UniPathway" id="UPA00031">
    <property type="reaction ID" value="UER00009"/>
</dbReference>
<dbReference type="GO" id="GO:0005737">
    <property type="term" value="C:cytoplasm"/>
    <property type="evidence" value="ECO:0007669"/>
    <property type="project" value="UniProtKB-SubCell"/>
</dbReference>
<dbReference type="GO" id="GO:0003949">
    <property type="term" value="F:1-(5-phosphoribosyl)-5-[(5-phosphoribosylamino)methylideneamino]imidazole-4-carboxamide isomerase activity"/>
    <property type="evidence" value="ECO:0007669"/>
    <property type="project" value="UniProtKB-UniRule"/>
</dbReference>
<dbReference type="GO" id="GO:0000105">
    <property type="term" value="P:L-histidine biosynthetic process"/>
    <property type="evidence" value="ECO:0007669"/>
    <property type="project" value="UniProtKB-UniRule"/>
</dbReference>
<dbReference type="GO" id="GO:0000162">
    <property type="term" value="P:L-tryptophan biosynthetic process"/>
    <property type="evidence" value="ECO:0007669"/>
    <property type="project" value="TreeGrafter"/>
</dbReference>
<dbReference type="CDD" id="cd04732">
    <property type="entry name" value="HisA"/>
    <property type="match status" value="1"/>
</dbReference>
<dbReference type="FunFam" id="3.20.20.70:FF:000009">
    <property type="entry name" value="1-(5-phosphoribosyl)-5-[(5-phosphoribosylamino)methylideneamino] imidazole-4-carboxamide isomerase"/>
    <property type="match status" value="1"/>
</dbReference>
<dbReference type="Gene3D" id="3.20.20.70">
    <property type="entry name" value="Aldolase class I"/>
    <property type="match status" value="1"/>
</dbReference>
<dbReference type="HAMAP" id="MF_01014">
    <property type="entry name" value="HisA"/>
    <property type="match status" value="1"/>
</dbReference>
<dbReference type="InterPro" id="IPR013785">
    <property type="entry name" value="Aldolase_TIM"/>
</dbReference>
<dbReference type="InterPro" id="IPR006062">
    <property type="entry name" value="His_biosynth"/>
</dbReference>
<dbReference type="InterPro" id="IPR006063">
    <property type="entry name" value="HisA_bact_arch"/>
</dbReference>
<dbReference type="InterPro" id="IPR044524">
    <property type="entry name" value="Isoase_HisA-like"/>
</dbReference>
<dbReference type="InterPro" id="IPR023016">
    <property type="entry name" value="Isoase_HisA-like_bact"/>
</dbReference>
<dbReference type="InterPro" id="IPR011060">
    <property type="entry name" value="RibuloseP-bd_barrel"/>
</dbReference>
<dbReference type="NCBIfam" id="TIGR00007">
    <property type="entry name" value="1-(5-phosphoribosyl)-5-[(5-phosphoribosylamino)methylideneamino]imidazole-4-carboxamide isomerase"/>
    <property type="match status" value="1"/>
</dbReference>
<dbReference type="PANTHER" id="PTHR43090">
    <property type="entry name" value="1-(5-PHOSPHORIBOSYL)-5-[(5-PHOSPHORIBOSYLAMINO)METHYLIDENEAMINO] IMIDAZOLE-4-CARBOXAMIDE ISOMERASE"/>
    <property type="match status" value="1"/>
</dbReference>
<dbReference type="PANTHER" id="PTHR43090:SF2">
    <property type="entry name" value="1-(5-PHOSPHORIBOSYL)-5-[(5-PHOSPHORIBOSYLAMINO)METHYLIDENEAMINO] IMIDAZOLE-4-CARBOXAMIDE ISOMERASE"/>
    <property type="match status" value="1"/>
</dbReference>
<dbReference type="Pfam" id="PF00977">
    <property type="entry name" value="His_biosynth"/>
    <property type="match status" value="1"/>
</dbReference>
<dbReference type="SUPFAM" id="SSF51366">
    <property type="entry name" value="Ribulose-phoshate binding barrel"/>
    <property type="match status" value="1"/>
</dbReference>
<sequence>MLIIPAIDLKDGACVRLRQGRMEDSTVFSDDPVSMAAKWVEGGCRRLHLVDLNGAFEGQPVNGEVVTAIAKRYPNLPIQIGGGIRTLETIEHYVRAGVSYVIIGTKAVKEPEFVTEACKAFPGKVIVGLDAKDGFVATDGWAEVSSVQATDLAKRFEADGVSAIVYTDIAKDGMMQGCNVEATAALAAASKIPVIASGGIHNLGDIEKLLLARSPGIIGAITGRAIYEGTLDVAEAQAFCDSFKG</sequence>
<protein>
    <recommendedName>
        <fullName evidence="1">1-(5-phosphoribosyl)-5-[(5-phosphoribosylamino)methylideneamino] imidazole-4-carboxamide isomerase</fullName>
        <ecNumber evidence="1">5.3.1.16</ecNumber>
    </recommendedName>
    <alternativeName>
        <fullName evidence="1">Phosphoribosylformimino-5-aminoimidazole carboxamide ribotide isomerase</fullName>
    </alternativeName>
</protein>
<proteinExistence type="inferred from homology"/>
<reference key="1">
    <citation type="submission" date="2007-04" db="EMBL/GenBank/DDBJ databases">
        <title>Complete sequence of Pseudomonas mendocina ymp.</title>
        <authorList>
            <consortium name="US DOE Joint Genome Institute"/>
            <person name="Copeland A."/>
            <person name="Lucas S."/>
            <person name="Lapidus A."/>
            <person name="Barry K."/>
            <person name="Glavina del Rio T."/>
            <person name="Dalin E."/>
            <person name="Tice H."/>
            <person name="Pitluck S."/>
            <person name="Kiss H."/>
            <person name="Brettin T."/>
            <person name="Detter J.C."/>
            <person name="Bruce D."/>
            <person name="Han C."/>
            <person name="Schmutz J."/>
            <person name="Larimer F."/>
            <person name="Land M."/>
            <person name="Hauser L."/>
            <person name="Kyrpides N."/>
            <person name="Mikhailova N."/>
            <person name="Hersman L."/>
            <person name="Dubois J."/>
            <person name="Maurice P."/>
            <person name="Richardson P."/>
        </authorList>
    </citation>
    <scope>NUCLEOTIDE SEQUENCE [LARGE SCALE GENOMIC DNA]</scope>
    <source>
        <strain>ymp</strain>
    </source>
</reference>
<name>HIS4_ECTM1</name>